<protein>
    <recommendedName>
        <fullName>Hemoglobin subunit beta-2</fullName>
    </recommendedName>
    <alternativeName>
        <fullName>Beta-2-globin</fullName>
    </alternativeName>
    <alternativeName>
        <fullName>Hemoglobin beta-2 chain</fullName>
    </alternativeName>
    <alternativeName>
        <fullName>Hemoglobin beta-II chain</fullName>
    </alternativeName>
</protein>
<dbReference type="PIR" id="JU0337">
    <property type="entry name" value="HBNJ2I"/>
</dbReference>
<dbReference type="SMR" id="P22743"/>
<dbReference type="Proteomes" id="UP000694559">
    <property type="component" value="Unplaced"/>
</dbReference>
<dbReference type="GO" id="GO:0072562">
    <property type="term" value="C:blood microparticle"/>
    <property type="evidence" value="ECO:0007669"/>
    <property type="project" value="TreeGrafter"/>
</dbReference>
<dbReference type="GO" id="GO:0031838">
    <property type="term" value="C:haptoglobin-hemoglobin complex"/>
    <property type="evidence" value="ECO:0007669"/>
    <property type="project" value="TreeGrafter"/>
</dbReference>
<dbReference type="GO" id="GO:0005833">
    <property type="term" value="C:hemoglobin complex"/>
    <property type="evidence" value="ECO:0007669"/>
    <property type="project" value="InterPro"/>
</dbReference>
<dbReference type="GO" id="GO:0031720">
    <property type="term" value="F:haptoglobin binding"/>
    <property type="evidence" value="ECO:0007669"/>
    <property type="project" value="TreeGrafter"/>
</dbReference>
<dbReference type="GO" id="GO:0020037">
    <property type="term" value="F:heme binding"/>
    <property type="evidence" value="ECO:0007669"/>
    <property type="project" value="InterPro"/>
</dbReference>
<dbReference type="GO" id="GO:0046872">
    <property type="term" value="F:metal ion binding"/>
    <property type="evidence" value="ECO:0007669"/>
    <property type="project" value="UniProtKB-KW"/>
</dbReference>
<dbReference type="GO" id="GO:0043177">
    <property type="term" value="F:organic acid binding"/>
    <property type="evidence" value="ECO:0007669"/>
    <property type="project" value="TreeGrafter"/>
</dbReference>
<dbReference type="GO" id="GO:0019825">
    <property type="term" value="F:oxygen binding"/>
    <property type="evidence" value="ECO:0007669"/>
    <property type="project" value="InterPro"/>
</dbReference>
<dbReference type="GO" id="GO:0005344">
    <property type="term" value="F:oxygen carrier activity"/>
    <property type="evidence" value="ECO:0007669"/>
    <property type="project" value="UniProtKB-KW"/>
</dbReference>
<dbReference type="GO" id="GO:0004601">
    <property type="term" value="F:peroxidase activity"/>
    <property type="evidence" value="ECO:0007669"/>
    <property type="project" value="TreeGrafter"/>
</dbReference>
<dbReference type="GO" id="GO:0042744">
    <property type="term" value="P:hydrogen peroxide catabolic process"/>
    <property type="evidence" value="ECO:0007669"/>
    <property type="project" value="TreeGrafter"/>
</dbReference>
<dbReference type="CDD" id="cd08925">
    <property type="entry name" value="Hb-beta-like"/>
    <property type="match status" value="1"/>
</dbReference>
<dbReference type="FunFam" id="1.10.490.10:FF:000001">
    <property type="entry name" value="Hemoglobin subunit beta"/>
    <property type="match status" value="1"/>
</dbReference>
<dbReference type="Gene3D" id="1.10.490.10">
    <property type="entry name" value="Globins"/>
    <property type="match status" value="1"/>
</dbReference>
<dbReference type="InterPro" id="IPR000971">
    <property type="entry name" value="Globin"/>
</dbReference>
<dbReference type="InterPro" id="IPR009050">
    <property type="entry name" value="Globin-like_sf"/>
</dbReference>
<dbReference type="InterPro" id="IPR012292">
    <property type="entry name" value="Globin/Proto"/>
</dbReference>
<dbReference type="InterPro" id="IPR002337">
    <property type="entry name" value="Hemoglobin_b"/>
</dbReference>
<dbReference type="InterPro" id="IPR050056">
    <property type="entry name" value="Hemoglobin_oxygen_transport"/>
</dbReference>
<dbReference type="PANTHER" id="PTHR11442">
    <property type="entry name" value="HEMOGLOBIN FAMILY MEMBER"/>
    <property type="match status" value="1"/>
</dbReference>
<dbReference type="PANTHER" id="PTHR11442:SF7">
    <property type="entry name" value="HEMOGLOBIN SUBUNIT EPSILON"/>
    <property type="match status" value="1"/>
</dbReference>
<dbReference type="Pfam" id="PF00042">
    <property type="entry name" value="Globin"/>
    <property type="match status" value="1"/>
</dbReference>
<dbReference type="PRINTS" id="PR00814">
    <property type="entry name" value="BETAHAEM"/>
</dbReference>
<dbReference type="SUPFAM" id="SSF46458">
    <property type="entry name" value="Globin-like"/>
    <property type="match status" value="1"/>
</dbReference>
<dbReference type="PROSITE" id="PS01033">
    <property type="entry name" value="GLOBIN"/>
    <property type="match status" value="1"/>
</dbReference>
<evidence type="ECO:0000255" key="1">
    <source>
        <dbReference type="PROSITE-ProRule" id="PRU00238"/>
    </source>
</evidence>
<feature type="chain" id="PRO_0000053033" description="Hemoglobin subunit beta-2">
    <location>
        <begin position="1"/>
        <end position="146"/>
    </location>
</feature>
<feature type="domain" description="Globin" evidence="1">
    <location>
        <begin position="2"/>
        <end position="146"/>
    </location>
</feature>
<feature type="binding site" description="distal binding residue">
    <location>
        <position position="63"/>
    </location>
    <ligand>
        <name>heme b</name>
        <dbReference type="ChEBI" id="CHEBI:60344"/>
    </ligand>
    <ligandPart>
        <name>Fe</name>
        <dbReference type="ChEBI" id="CHEBI:18248"/>
    </ligandPart>
</feature>
<feature type="binding site" description="proximal binding residue">
    <location>
        <position position="92"/>
    </location>
    <ligand>
        <name>heme b</name>
        <dbReference type="ChEBI" id="CHEBI:60344"/>
    </ligand>
    <ligandPart>
        <name>Fe</name>
        <dbReference type="ChEBI" id="CHEBI:18248"/>
    </ligandPart>
</feature>
<name>HBB2_NAJNA</name>
<keyword id="KW-0903">Direct protein sequencing</keyword>
<keyword id="KW-0349">Heme</keyword>
<keyword id="KW-0408">Iron</keyword>
<keyword id="KW-0479">Metal-binding</keyword>
<keyword id="KW-0561">Oxygen transport</keyword>
<keyword id="KW-1185">Reference proteome</keyword>
<keyword id="KW-0813">Transport</keyword>
<gene>
    <name type="primary">HBB2</name>
</gene>
<reference key="1">
    <citation type="journal article" date="1994" name="J. Protein Chem.">
        <title>Primary structure of hemoglobin from cobra Naja naja naja.</title>
        <authorList>
            <person name="Naqvi S."/>
            <person name="Abbasi A."/>
            <person name="Zaidi Z.H."/>
        </authorList>
    </citation>
    <scope>PROTEIN SEQUENCE</scope>
    <source>
        <tissue>Blood</tissue>
    </source>
</reference>
<proteinExistence type="evidence at protein level"/>
<comment type="function">
    <text>Involved in oxygen transport from the lung to the various peripheral tissues.</text>
</comment>
<comment type="subunit">
    <text>Heterotetramer of two alpha chains and two beta chains.</text>
</comment>
<comment type="tissue specificity">
    <text>Red blood cells.</text>
</comment>
<comment type="similarity">
    <text evidence="1">Belongs to the globin family.</text>
</comment>
<organism>
    <name type="scientific">Naja naja</name>
    <name type="common">Indian cobra</name>
    <dbReference type="NCBI Taxonomy" id="35670"/>
    <lineage>
        <taxon>Eukaryota</taxon>
        <taxon>Metazoa</taxon>
        <taxon>Chordata</taxon>
        <taxon>Craniata</taxon>
        <taxon>Vertebrata</taxon>
        <taxon>Euteleostomi</taxon>
        <taxon>Lepidosauria</taxon>
        <taxon>Squamata</taxon>
        <taxon>Bifurcata</taxon>
        <taxon>Unidentata</taxon>
        <taxon>Episquamata</taxon>
        <taxon>Toxicofera</taxon>
        <taxon>Serpentes</taxon>
        <taxon>Colubroidea</taxon>
        <taxon>Elapidae</taxon>
        <taxon>Elapinae</taxon>
        <taxon>Naja</taxon>
    </lineage>
</organism>
<accession>P22743</accession>
<sequence length="146" mass="16290">VHWSAEEKQLITSLWAKVDVPEVGAATLGKMMVMYPWTQRFFAHFGNLSGPSALCGNPQVRAHGKKVLTSFGEALKHLDNVKETFAKLSELHFDKLHVDPENFKLLGNVLIIVLAGHHGKEFTPSTHASFQKLVNVVAHALARRYH</sequence>